<accession>P9WN79</accession>
<accession>L0TDR3</accession>
<accession>O07168</accession>
<accession>P64184</accession>
<gene>
    <name type="primary">glpD2</name>
    <name type="ordered locus">Rv3302c</name>
    <name type="ORF">MTCI418A.04c</name>
    <name type="ORF">MTV016.01c</name>
</gene>
<organism>
    <name type="scientific">Mycobacterium tuberculosis (strain ATCC 25618 / H37Rv)</name>
    <dbReference type="NCBI Taxonomy" id="83332"/>
    <lineage>
        <taxon>Bacteria</taxon>
        <taxon>Bacillati</taxon>
        <taxon>Actinomycetota</taxon>
        <taxon>Actinomycetes</taxon>
        <taxon>Mycobacteriales</taxon>
        <taxon>Mycobacteriaceae</taxon>
        <taxon>Mycobacterium</taxon>
        <taxon>Mycobacterium tuberculosis complex</taxon>
    </lineage>
</organism>
<sequence>MSNPIQAPDGGQGWPAAALGPAQRAVAWKRLGTEQFDVVVIGGGVVGSGCALDAATRGLKVALVEARDLASGTSSRSSKMFHGGLRYLEQLEFGLVREALYERELSLTTLAPHLVKPLPFLFPLTKRWWERPYIAAGIFLYDRLGGAKSVPAQRHFTRAGALRLSPGLKRSSLIGGIRYYDTVVDDARHTMTVARTAAHYGAVVRCSTQVVALLREGDRVIGVGVRDSENGAVAEVRGHVVVNATGVWTDEIQALSKQRGRFQVRASKGVHVVVPRDRIVSDVAMILRTEKSVMFVIPWGSHWIIGTTDTDWNLDLAHPAATKADIDYILGTVNAVLATPLTHADIDGVYAGLRPLLAGESDDTSKLSREHAVAVPAAGLVAIAGGKYTTYRVMAADAIDAAVQFIPARVAPSITEKVSLLGADGYFALVNQAEHVGALQGLHPYRVRHLLDRYGSLISDVLAMAASDPSLLSPITEAPGYLKVEAAYAAAAEGALHLEDILARRMRISIEYPHRGVDCAREVAEVVAPVLGWTAADIDREVANYMARVEAEVLSQAQPDDVSADMLRASAPEARAEILEPVPLD</sequence>
<protein>
    <recommendedName>
        <fullName>Glycerol-3-phosphate dehydrogenase 2</fullName>
        <ecNumber>1.1.5.3</ecNumber>
    </recommendedName>
</protein>
<evidence type="ECO:0000250" key="1"/>
<evidence type="ECO:0000305" key="2"/>
<name>GLPD2_MYCTU</name>
<feature type="chain" id="PRO_0000126102" description="Glycerol-3-phosphate dehydrogenase 2">
    <location>
        <begin position="1"/>
        <end position="585"/>
    </location>
</feature>
<feature type="binding site" evidence="1">
    <location>
        <begin position="37"/>
        <end position="65"/>
    </location>
    <ligand>
        <name>FAD</name>
        <dbReference type="ChEBI" id="CHEBI:57692"/>
    </ligand>
</feature>
<proteinExistence type="evidence at protein level"/>
<comment type="catalytic activity">
    <reaction>
        <text>a quinone + sn-glycerol 3-phosphate = dihydroxyacetone phosphate + a quinol</text>
        <dbReference type="Rhea" id="RHEA:18977"/>
        <dbReference type="ChEBI" id="CHEBI:24646"/>
        <dbReference type="ChEBI" id="CHEBI:57597"/>
        <dbReference type="ChEBI" id="CHEBI:57642"/>
        <dbReference type="ChEBI" id="CHEBI:132124"/>
        <dbReference type="EC" id="1.1.5.3"/>
    </reaction>
</comment>
<comment type="cofactor">
    <cofactor evidence="1">
        <name>FAD</name>
        <dbReference type="ChEBI" id="CHEBI:57692"/>
    </cofactor>
</comment>
<comment type="subcellular location">
    <subcellularLocation>
        <location evidence="1">Cytoplasm</location>
    </subcellularLocation>
</comment>
<comment type="similarity">
    <text evidence="2">Belongs to the FAD-dependent glycerol-3-phosphate dehydrogenase family.</text>
</comment>
<dbReference type="EC" id="1.1.5.3"/>
<dbReference type="EMBL" id="AL123456">
    <property type="protein sequence ID" value="CCP46121.1"/>
    <property type="molecule type" value="Genomic_DNA"/>
</dbReference>
<dbReference type="PIR" id="H70533">
    <property type="entry name" value="H70533"/>
</dbReference>
<dbReference type="RefSeq" id="NP_217819.1">
    <property type="nucleotide sequence ID" value="NC_000962.3"/>
</dbReference>
<dbReference type="RefSeq" id="WP_003417217.1">
    <property type="nucleotide sequence ID" value="NZ_NVQJ01000003.1"/>
</dbReference>
<dbReference type="SMR" id="P9WN79"/>
<dbReference type="FunCoup" id="P9WN79">
    <property type="interactions" value="337"/>
</dbReference>
<dbReference type="STRING" id="83332.Rv3302c"/>
<dbReference type="PaxDb" id="83332-Rv3302c"/>
<dbReference type="DNASU" id="887211"/>
<dbReference type="GeneID" id="887211"/>
<dbReference type="KEGG" id="mtu:Rv3302c"/>
<dbReference type="KEGG" id="mtv:RVBD_3302c"/>
<dbReference type="TubercuList" id="Rv3302c"/>
<dbReference type="eggNOG" id="COG0578">
    <property type="taxonomic scope" value="Bacteria"/>
</dbReference>
<dbReference type="InParanoid" id="P9WN79"/>
<dbReference type="OrthoDB" id="9766796at2"/>
<dbReference type="PhylomeDB" id="P9WN79"/>
<dbReference type="Proteomes" id="UP000001584">
    <property type="component" value="Chromosome"/>
</dbReference>
<dbReference type="GO" id="GO:0005737">
    <property type="term" value="C:cytoplasm"/>
    <property type="evidence" value="ECO:0007669"/>
    <property type="project" value="UniProtKB-SubCell"/>
</dbReference>
<dbReference type="GO" id="GO:0005886">
    <property type="term" value="C:plasma membrane"/>
    <property type="evidence" value="ECO:0007005"/>
    <property type="project" value="MTBBASE"/>
</dbReference>
<dbReference type="GO" id="GO:0004368">
    <property type="term" value="F:glycerol-3-phosphate dehydrogenase (quinone) activity"/>
    <property type="evidence" value="ECO:0000318"/>
    <property type="project" value="GO_Central"/>
</dbReference>
<dbReference type="GO" id="GO:0006071">
    <property type="term" value="P:glycerol metabolic process"/>
    <property type="evidence" value="ECO:0007669"/>
    <property type="project" value="UniProtKB-KW"/>
</dbReference>
<dbReference type="GO" id="GO:0046168">
    <property type="term" value="P:glycerol-3-phosphate catabolic process"/>
    <property type="evidence" value="ECO:0000318"/>
    <property type="project" value="GO_Central"/>
</dbReference>
<dbReference type="FunFam" id="1.10.8.870:FF:000003">
    <property type="entry name" value="Glycerol-3-phosphate dehydrogenase"/>
    <property type="match status" value="1"/>
</dbReference>
<dbReference type="Gene3D" id="1.10.8.870">
    <property type="entry name" value="Alpha-glycerophosphate oxidase, cap domain"/>
    <property type="match status" value="1"/>
</dbReference>
<dbReference type="Gene3D" id="3.30.9.10">
    <property type="entry name" value="D-Amino Acid Oxidase, subunit A, domain 2"/>
    <property type="match status" value="1"/>
</dbReference>
<dbReference type="Gene3D" id="3.50.50.60">
    <property type="entry name" value="FAD/NAD(P)-binding domain"/>
    <property type="match status" value="1"/>
</dbReference>
<dbReference type="InterPro" id="IPR031656">
    <property type="entry name" value="DAO_C"/>
</dbReference>
<dbReference type="InterPro" id="IPR038299">
    <property type="entry name" value="DAO_C_sf"/>
</dbReference>
<dbReference type="InterPro" id="IPR006076">
    <property type="entry name" value="FAD-dep_OxRdtase"/>
</dbReference>
<dbReference type="InterPro" id="IPR036188">
    <property type="entry name" value="FAD/NAD-bd_sf"/>
</dbReference>
<dbReference type="InterPro" id="IPR000447">
    <property type="entry name" value="G3P_DH_FAD-dep"/>
</dbReference>
<dbReference type="PANTHER" id="PTHR11985">
    <property type="entry name" value="GLYCEROL-3-PHOSPHATE DEHYDROGENASE"/>
    <property type="match status" value="1"/>
</dbReference>
<dbReference type="PANTHER" id="PTHR11985:SF31">
    <property type="entry name" value="GLYCEROL-3-PHOSPHATE DEHYDROGENASE 2"/>
    <property type="match status" value="1"/>
</dbReference>
<dbReference type="Pfam" id="PF01266">
    <property type="entry name" value="DAO"/>
    <property type="match status" value="1"/>
</dbReference>
<dbReference type="Pfam" id="PF16901">
    <property type="entry name" value="DAO_C"/>
    <property type="match status" value="1"/>
</dbReference>
<dbReference type="PRINTS" id="PR01001">
    <property type="entry name" value="FADG3PDH"/>
</dbReference>
<dbReference type="SUPFAM" id="SSF51905">
    <property type="entry name" value="FAD/NAD(P)-binding domain"/>
    <property type="match status" value="1"/>
</dbReference>
<dbReference type="PROSITE" id="PS00977">
    <property type="entry name" value="FAD_G3PDH_1"/>
    <property type="match status" value="1"/>
</dbReference>
<dbReference type="PROSITE" id="PS00978">
    <property type="entry name" value="FAD_G3PDH_2"/>
    <property type="match status" value="1"/>
</dbReference>
<keyword id="KW-0963">Cytoplasm</keyword>
<keyword id="KW-0274">FAD</keyword>
<keyword id="KW-0285">Flavoprotein</keyword>
<keyword id="KW-0319">Glycerol metabolism</keyword>
<keyword id="KW-0560">Oxidoreductase</keyword>
<keyword id="KW-1185">Reference proteome</keyword>
<reference key="1">
    <citation type="journal article" date="1998" name="Nature">
        <title>Deciphering the biology of Mycobacterium tuberculosis from the complete genome sequence.</title>
        <authorList>
            <person name="Cole S.T."/>
            <person name="Brosch R."/>
            <person name="Parkhill J."/>
            <person name="Garnier T."/>
            <person name="Churcher C.M."/>
            <person name="Harris D.E."/>
            <person name="Gordon S.V."/>
            <person name="Eiglmeier K."/>
            <person name="Gas S."/>
            <person name="Barry C.E. III"/>
            <person name="Tekaia F."/>
            <person name="Badcock K."/>
            <person name="Basham D."/>
            <person name="Brown D."/>
            <person name="Chillingworth T."/>
            <person name="Connor R."/>
            <person name="Davies R.M."/>
            <person name="Devlin K."/>
            <person name="Feltwell T."/>
            <person name="Gentles S."/>
            <person name="Hamlin N."/>
            <person name="Holroyd S."/>
            <person name="Hornsby T."/>
            <person name="Jagels K."/>
            <person name="Krogh A."/>
            <person name="McLean J."/>
            <person name="Moule S."/>
            <person name="Murphy L.D."/>
            <person name="Oliver S."/>
            <person name="Osborne J."/>
            <person name="Quail M.A."/>
            <person name="Rajandream M.A."/>
            <person name="Rogers J."/>
            <person name="Rutter S."/>
            <person name="Seeger K."/>
            <person name="Skelton S."/>
            <person name="Squares S."/>
            <person name="Squares R."/>
            <person name="Sulston J.E."/>
            <person name="Taylor K."/>
            <person name="Whitehead S."/>
            <person name="Barrell B.G."/>
        </authorList>
    </citation>
    <scope>NUCLEOTIDE SEQUENCE [LARGE SCALE GENOMIC DNA]</scope>
    <source>
        <strain>ATCC 25618 / H37Rv</strain>
    </source>
</reference>
<reference key="2">
    <citation type="journal article" date="2011" name="Mol. Cell. Proteomics">
        <title>Proteogenomic analysis of Mycobacterium tuberculosis by high resolution mass spectrometry.</title>
        <authorList>
            <person name="Kelkar D.S."/>
            <person name="Kumar D."/>
            <person name="Kumar P."/>
            <person name="Balakrishnan L."/>
            <person name="Muthusamy B."/>
            <person name="Yadav A.K."/>
            <person name="Shrivastava P."/>
            <person name="Marimuthu A."/>
            <person name="Anand S."/>
            <person name="Sundaram H."/>
            <person name="Kingsbury R."/>
            <person name="Harsha H.C."/>
            <person name="Nair B."/>
            <person name="Prasad T.S."/>
            <person name="Chauhan D.S."/>
            <person name="Katoch K."/>
            <person name="Katoch V.M."/>
            <person name="Kumar P."/>
            <person name="Chaerkady R."/>
            <person name="Ramachandran S."/>
            <person name="Dash D."/>
            <person name="Pandey A."/>
        </authorList>
    </citation>
    <scope>IDENTIFICATION BY MASS SPECTROMETRY [LARGE SCALE ANALYSIS]</scope>
    <source>
        <strain>ATCC 25618 / H37Rv</strain>
    </source>
</reference>